<evidence type="ECO:0000255" key="1">
    <source>
        <dbReference type="HAMAP-Rule" id="MF_00426"/>
    </source>
</evidence>
<protein>
    <recommendedName>
        <fullName evidence="1">Na(+)-translocating NADH-quinone reductase subunit B</fullName>
        <shortName evidence="1">Na(+)-NQR subunit B</shortName>
        <shortName evidence="1">Na(+)-translocating NQR subunit B</shortName>
        <ecNumber evidence="1">7.2.1.1</ecNumber>
    </recommendedName>
    <alternativeName>
        <fullName evidence="1">NQR complex subunit B</fullName>
    </alternativeName>
    <alternativeName>
        <fullName evidence="1">NQR-1 subunit B</fullName>
    </alternativeName>
</protein>
<accession>A5UAX2</accession>
<reference key="1">
    <citation type="journal article" date="2007" name="Genome Biol.">
        <title>Characterization and modeling of the Haemophilus influenzae core and supragenomes based on the complete genomic sequences of Rd and 12 clinical nontypeable strains.</title>
        <authorList>
            <person name="Hogg J.S."/>
            <person name="Hu F.Z."/>
            <person name="Janto B."/>
            <person name="Boissy R."/>
            <person name="Hayes J."/>
            <person name="Keefe R."/>
            <person name="Post J.C."/>
            <person name="Ehrlich G.D."/>
        </authorList>
    </citation>
    <scope>NUCLEOTIDE SEQUENCE [LARGE SCALE GENOMIC DNA]</scope>
    <source>
        <strain>PittEE</strain>
    </source>
</reference>
<dbReference type="EC" id="7.2.1.1" evidence="1"/>
<dbReference type="EMBL" id="CP000671">
    <property type="protein sequence ID" value="ABQ97923.1"/>
    <property type="molecule type" value="Genomic_DNA"/>
</dbReference>
<dbReference type="SMR" id="A5UAX2"/>
<dbReference type="KEGG" id="hip:CGSHiEE_02360"/>
<dbReference type="HOGENOM" id="CLU_042020_1_1_6"/>
<dbReference type="GO" id="GO:0005886">
    <property type="term" value="C:plasma membrane"/>
    <property type="evidence" value="ECO:0007669"/>
    <property type="project" value="UniProtKB-SubCell"/>
</dbReference>
<dbReference type="GO" id="GO:0010181">
    <property type="term" value="F:FMN binding"/>
    <property type="evidence" value="ECO:0007669"/>
    <property type="project" value="InterPro"/>
</dbReference>
<dbReference type="GO" id="GO:0016655">
    <property type="term" value="F:oxidoreductase activity, acting on NAD(P)H, quinone or similar compound as acceptor"/>
    <property type="evidence" value="ECO:0007669"/>
    <property type="project" value="UniProtKB-UniRule"/>
</dbReference>
<dbReference type="GO" id="GO:0022904">
    <property type="term" value="P:respiratory electron transport chain"/>
    <property type="evidence" value="ECO:0007669"/>
    <property type="project" value="InterPro"/>
</dbReference>
<dbReference type="GO" id="GO:0006814">
    <property type="term" value="P:sodium ion transport"/>
    <property type="evidence" value="ECO:0007669"/>
    <property type="project" value="UniProtKB-UniRule"/>
</dbReference>
<dbReference type="GO" id="GO:0055085">
    <property type="term" value="P:transmembrane transport"/>
    <property type="evidence" value="ECO:0007669"/>
    <property type="project" value="InterPro"/>
</dbReference>
<dbReference type="HAMAP" id="MF_00426">
    <property type="entry name" value="NqrB"/>
    <property type="match status" value="1"/>
</dbReference>
<dbReference type="InterPro" id="IPR010966">
    <property type="entry name" value="NqrB"/>
</dbReference>
<dbReference type="InterPro" id="IPR004338">
    <property type="entry name" value="NqrB/RnfD"/>
</dbReference>
<dbReference type="NCBIfam" id="TIGR01937">
    <property type="entry name" value="nqrB"/>
    <property type="match status" value="1"/>
</dbReference>
<dbReference type="NCBIfam" id="NF003756">
    <property type="entry name" value="PRK05349.1"/>
    <property type="match status" value="1"/>
</dbReference>
<dbReference type="PANTHER" id="PTHR30578">
    <property type="entry name" value="ELECTRON TRANSPORT COMPLEX PROTEIN RNFD"/>
    <property type="match status" value="1"/>
</dbReference>
<dbReference type="PANTHER" id="PTHR30578:SF1">
    <property type="entry name" value="NA(+)-TRANSLOCATING NADH-QUINONE REDUCTASE SUBUNIT B"/>
    <property type="match status" value="1"/>
</dbReference>
<dbReference type="Pfam" id="PF03116">
    <property type="entry name" value="NQR2_RnfD_RnfE"/>
    <property type="match status" value="1"/>
</dbReference>
<dbReference type="PIRSF" id="PIRSF016055">
    <property type="entry name" value="NADH-UbQ_OxRdtase_B_su"/>
    <property type="match status" value="1"/>
</dbReference>
<sequence length="411" mass="44729">MGLKNLFEKMEPAFLPGGKYSKLYPIFESIYTLLYTPGTVTHKNTHVRDALDSKRMMITVFLALFPAIFYGMYNVGNQAIPALNQLGNLDQLIANDWHYALASSLGLDLTANATWGSKMALGAIFFLPIYLVVFTVCTIWELLFSVVRGHEVNEGMFVSTILFALIVPPTLPLWQAALGITFGIIVAKEIFGGVGRNFMNPALAGRAFLFFAYPAQISGDTVWTAADGFSGATALSQWSQGGQGALQHTVTGAPITWMDAFVGNLPGSMGEVSTLAILIGGAVIVFTRIAAWRIIAGVMIGMIATSTLFNLIGSETNPMFSMPWHWHFVLGGFALGMVFMATDPVSASFTNTGKWWYGALIGVMAVLIRTVNPAYPEGMMLAILFANLFAPIFDYIVVQANIKRRRARTNG</sequence>
<gene>
    <name evidence="1" type="primary">nqrB</name>
    <name type="ordered locus">CGSHiEE_02360</name>
</gene>
<comment type="function">
    <text evidence="1">NQR complex catalyzes the reduction of ubiquinone-1 to ubiquinol by two successive reactions, coupled with the transport of Na(+) ions from the cytoplasm to the periplasm. NqrA to NqrE are probably involved in the second step, the conversion of ubisemiquinone to ubiquinol.</text>
</comment>
<comment type="catalytic activity">
    <reaction evidence="1">
        <text>a ubiquinone + n Na(+)(in) + NADH + H(+) = a ubiquinol + n Na(+)(out) + NAD(+)</text>
        <dbReference type="Rhea" id="RHEA:47748"/>
        <dbReference type="Rhea" id="RHEA-COMP:9565"/>
        <dbReference type="Rhea" id="RHEA-COMP:9566"/>
        <dbReference type="ChEBI" id="CHEBI:15378"/>
        <dbReference type="ChEBI" id="CHEBI:16389"/>
        <dbReference type="ChEBI" id="CHEBI:17976"/>
        <dbReference type="ChEBI" id="CHEBI:29101"/>
        <dbReference type="ChEBI" id="CHEBI:57540"/>
        <dbReference type="ChEBI" id="CHEBI:57945"/>
        <dbReference type="EC" id="7.2.1.1"/>
    </reaction>
</comment>
<comment type="cofactor">
    <cofactor evidence="1">
        <name>FMN</name>
        <dbReference type="ChEBI" id="CHEBI:58210"/>
    </cofactor>
</comment>
<comment type="subunit">
    <text evidence="1">Composed of six subunits; NqrA, NqrB, NqrC, NqrD, NqrE and NqrF.</text>
</comment>
<comment type="subcellular location">
    <subcellularLocation>
        <location evidence="1">Cell inner membrane</location>
        <topology evidence="1">Multi-pass membrane protein</topology>
    </subcellularLocation>
</comment>
<comment type="similarity">
    <text evidence="1">Belongs to the NqrB/RnfD family.</text>
</comment>
<proteinExistence type="inferred from homology"/>
<name>NQRB_HAEIE</name>
<feature type="chain" id="PRO_1000060139" description="Na(+)-translocating NADH-quinone reductase subunit B">
    <location>
        <begin position="1"/>
        <end position="411"/>
    </location>
</feature>
<feature type="transmembrane region" description="Helical" evidence="1">
    <location>
        <begin position="56"/>
        <end position="76"/>
    </location>
</feature>
<feature type="transmembrane region" description="Helical" evidence="1">
    <location>
        <begin position="120"/>
        <end position="140"/>
    </location>
</feature>
<feature type="transmembrane region" description="Helical" evidence="1">
    <location>
        <begin position="166"/>
        <end position="186"/>
    </location>
</feature>
<feature type="transmembrane region" description="Helical" evidence="1">
    <location>
        <begin position="272"/>
        <end position="292"/>
    </location>
</feature>
<feature type="transmembrane region" description="Helical" evidence="1">
    <location>
        <begin position="294"/>
        <end position="314"/>
    </location>
</feature>
<feature type="transmembrane region" description="Helical" evidence="1">
    <location>
        <begin position="319"/>
        <end position="339"/>
    </location>
</feature>
<feature type="transmembrane region" description="Helical" evidence="1">
    <location>
        <begin position="348"/>
        <end position="368"/>
    </location>
</feature>
<feature type="transmembrane region" description="Helical" evidence="1">
    <location>
        <begin position="378"/>
        <end position="398"/>
    </location>
</feature>
<feature type="modified residue" description="FMN phosphoryl threonine" evidence="1">
    <location>
        <position position="233"/>
    </location>
</feature>
<organism>
    <name type="scientific">Haemophilus influenzae (strain PittEE)</name>
    <dbReference type="NCBI Taxonomy" id="374930"/>
    <lineage>
        <taxon>Bacteria</taxon>
        <taxon>Pseudomonadati</taxon>
        <taxon>Pseudomonadota</taxon>
        <taxon>Gammaproteobacteria</taxon>
        <taxon>Pasteurellales</taxon>
        <taxon>Pasteurellaceae</taxon>
        <taxon>Haemophilus</taxon>
    </lineage>
</organism>
<keyword id="KW-0997">Cell inner membrane</keyword>
<keyword id="KW-1003">Cell membrane</keyword>
<keyword id="KW-0285">Flavoprotein</keyword>
<keyword id="KW-0288">FMN</keyword>
<keyword id="KW-0406">Ion transport</keyword>
<keyword id="KW-0472">Membrane</keyword>
<keyword id="KW-0520">NAD</keyword>
<keyword id="KW-0597">Phosphoprotein</keyword>
<keyword id="KW-0915">Sodium</keyword>
<keyword id="KW-0739">Sodium transport</keyword>
<keyword id="KW-1278">Translocase</keyword>
<keyword id="KW-0812">Transmembrane</keyword>
<keyword id="KW-1133">Transmembrane helix</keyword>
<keyword id="KW-0813">Transport</keyword>
<keyword id="KW-0830">Ubiquinone</keyword>